<evidence type="ECO:0000255" key="1">
    <source>
        <dbReference type="HAMAP-Rule" id="MF_01363"/>
    </source>
</evidence>
<evidence type="ECO:0000305" key="2"/>
<comment type="function">
    <text evidence="1">This protein binds to 23S rRNA in the presence of protein L20.</text>
</comment>
<comment type="subunit">
    <text evidence="1">Part of the 50S ribosomal subunit. Contacts protein L20.</text>
</comment>
<comment type="similarity">
    <text evidence="1">Belongs to the bacterial ribosomal protein bL21 family.</text>
</comment>
<protein>
    <recommendedName>
        <fullName evidence="1">Large ribosomal subunit protein bL21</fullName>
    </recommendedName>
    <alternativeName>
        <fullName evidence="2">50S ribosomal protein L21</fullName>
    </alternativeName>
</protein>
<keyword id="KW-1185">Reference proteome</keyword>
<keyword id="KW-0687">Ribonucleoprotein</keyword>
<keyword id="KW-0689">Ribosomal protein</keyword>
<keyword id="KW-0694">RNA-binding</keyword>
<keyword id="KW-0699">rRNA-binding</keyword>
<name>RL21_ALIB4</name>
<gene>
    <name evidence="1" type="primary">rplU</name>
    <name type="ordered locus">Abu_1610</name>
</gene>
<reference key="1">
    <citation type="journal article" date="2007" name="PLoS ONE">
        <title>The complete genome sequence and analysis of the Epsilonproteobacterium Arcobacter butzleri.</title>
        <authorList>
            <person name="Miller W.G."/>
            <person name="Parker C.T."/>
            <person name="Rubenfield M."/>
            <person name="Mendz G.L."/>
            <person name="Woesten M.M.S.M."/>
            <person name="Ussery D.W."/>
            <person name="Stolz J.F."/>
            <person name="Binnewies T.T."/>
            <person name="Hallin P.F."/>
            <person name="Wang G."/>
            <person name="Malek J.A."/>
            <person name="Rogosin A."/>
            <person name="Stanker L.H."/>
            <person name="Mandrell R.E."/>
        </authorList>
    </citation>
    <scope>NUCLEOTIDE SEQUENCE [LARGE SCALE GENOMIC DNA]</scope>
    <source>
        <strain>RM4018</strain>
    </source>
</reference>
<sequence>MYAIIKCGGKQYKVSEGDILDIDYTGKAAKETLEITDVLAINNGELKTGAAVANAKVEAVVVLDGTGVNRAKKVIIYKKRRRKDSKLKRGFRRSFTKVRITKIAA</sequence>
<organism>
    <name type="scientific">Aliarcobacter butzleri (strain RM4018)</name>
    <name type="common">Arcobacter butzleri</name>
    <dbReference type="NCBI Taxonomy" id="367737"/>
    <lineage>
        <taxon>Bacteria</taxon>
        <taxon>Pseudomonadati</taxon>
        <taxon>Campylobacterota</taxon>
        <taxon>Epsilonproteobacteria</taxon>
        <taxon>Campylobacterales</taxon>
        <taxon>Arcobacteraceae</taxon>
        <taxon>Aliarcobacter</taxon>
    </lineage>
</organism>
<dbReference type="EMBL" id="CP000361">
    <property type="protein sequence ID" value="ABV67858.1"/>
    <property type="molecule type" value="Genomic_DNA"/>
</dbReference>
<dbReference type="RefSeq" id="WP_004509841.1">
    <property type="nucleotide sequence ID" value="NC_009850.1"/>
</dbReference>
<dbReference type="SMR" id="A8EV85"/>
<dbReference type="STRING" id="367737.Abu_1610"/>
<dbReference type="GeneID" id="24305269"/>
<dbReference type="KEGG" id="abu:Abu_1610"/>
<dbReference type="eggNOG" id="COG0261">
    <property type="taxonomic scope" value="Bacteria"/>
</dbReference>
<dbReference type="HOGENOM" id="CLU_061463_3_1_7"/>
<dbReference type="Proteomes" id="UP000001136">
    <property type="component" value="Chromosome"/>
</dbReference>
<dbReference type="GO" id="GO:0005737">
    <property type="term" value="C:cytoplasm"/>
    <property type="evidence" value="ECO:0007669"/>
    <property type="project" value="UniProtKB-ARBA"/>
</dbReference>
<dbReference type="GO" id="GO:1990904">
    <property type="term" value="C:ribonucleoprotein complex"/>
    <property type="evidence" value="ECO:0007669"/>
    <property type="project" value="UniProtKB-KW"/>
</dbReference>
<dbReference type="GO" id="GO:0005840">
    <property type="term" value="C:ribosome"/>
    <property type="evidence" value="ECO:0007669"/>
    <property type="project" value="UniProtKB-KW"/>
</dbReference>
<dbReference type="GO" id="GO:0019843">
    <property type="term" value="F:rRNA binding"/>
    <property type="evidence" value="ECO:0007669"/>
    <property type="project" value="UniProtKB-UniRule"/>
</dbReference>
<dbReference type="GO" id="GO:0003735">
    <property type="term" value="F:structural constituent of ribosome"/>
    <property type="evidence" value="ECO:0007669"/>
    <property type="project" value="InterPro"/>
</dbReference>
<dbReference type="GO" id="GO:0006412">
    <property type="term" value="P:translation"/>
    <property type="evidence" value="ECO:0007669"/>
    <property type="project" value="UniProtKB-UniRule"/>
</dbReference>
<dbReference type="HAMAP" id="MF_01363">
    <property type="entry name" value="Ribosomal_bL21"/>
    <property type="match status" value="1"/>
</dbReference>
<dbReference type="InterPro" id="IPR028909">
    <property type="entry name" value="bL21-like"/>
</dbReference>
<dbReference type="InterPro" id="IPR036164">
    <property type="entry name" value="bL21-like_sf"/>
</dbReference>
<dbReference type="InterPro" id="IPR001787">
    <property type="entry name" value="Ribosomal_bL21"/>
</dbReference>
<dbReference type="InterPro" id="IPR018258">
    <property type="entry name" value="Ribosomal_bL21_CS"/>
</dbReference>
<dbReference type="NCBIfam" id="TIGR00061">
    <property type="entry name" value="L21"/>
    <property type="match status" value="1"/>
</dbReference>
<dbReference type="PANTHER" id="PTHR21349">
    <property type="entry name" value="50S RIBOSOMAL PROTEIN L21"/>
    <property type="match status" value="1"/>
</dbReference>
<dbReference type="PANTHER" id="PTHR21349:SF0">
    <property type="entry name" value="LARGE RIBOSOMAL SUBUNIT PROTEIN BL21M"/>
    <property type="match status" value="1"/>
</dbReference>
<dbReference type="Pfam" id="PF00829">
    <property type="entry name" value="Ribosomal_L21p"/>
    <property type="match status" value="1"/>
</dbReference>
<dbReference type="SUPFAM" id="SSF141091">
    <property type="entry name" value="L21p-like"/>
    <property type="match status" value="1"/>
</dbReference>
<dbReference type="PROSITE" id="PS01169">
    <property type="entry name" value="RIBOSOMAL_L21"/>
    <property type="match status" value="1"/>
</dbReference>
<accession>A8EV85</accession>
<proteinExistence type="inferred from homology"/>
<feature type="chain" id="PRO_1000067799" description="Large ribosomal subunit protein bL21">
    <location>
        <begin position="1"/>
        <end position="105"/>
    </location>
</feature>